<dbReference type="EMBL" id="AF042391">
    <property type="protein sequence ID" value="AAC08942.1"/>
    <property type="status" value="ALT_INIT"/>
    <property type="molecule type" value="mRNA"/>
</dbReference>
<dbReference type="EMBL" id="FO080313">
    <property type="protein sequence ID" value="CCD62795.2"/>
    <property type="molecule type" value="Genomic_DNA"/>
</dbReference>
<dbReference type="PIR" id="T42412">
    <property type="entry name" value="T42412"/>
</dbReference>
<dbReference type="RefSeq" id="NP_001367418.1">
    <property type="nucleotide sequence ID" value="NM_001381040.1"/>
</dbReference>
<dbReference type="RefSeq" id="NP_509445.2">
    <property type="nucleotide sequence ID" value="NM_077044.6"/>
</dbReference>
<dbReference type="BioGRID" id="46025">
    <property type="interactions" value="6"/>
</dbReference>
<dbReference type="FunCoup" id="O61466">
    <property type="interactions" value="1593"/>
</dbReference>
<dbReference type="STRING" id="6239.C03G5.7.1"/>
<dbReference type="PaxDb" id="6239-C03G5.7.1"/>
<dbReference type="EnsemblMetazoa" id="C03G5.7.1">
    <property type="protein sequence ID" value="C03G5.7.1"/>
    <property type="gene ID" value="WBGene00001448"/>
</dbReference>
<dbReference type="EnsemblMetazoa" id="C03G5.7.2">
    <property type="protein sequence ID" value="C03G5.7.2"/>
    <property type="gene ID" value="WBGene00001448"/>
</dbReference>
<dbReference type="GeneID" id="181104"/>
<dbReference type="UCSC" id="C03G5.7">
    <property type="organism name" value="c. elegans"/>
</dbReference>
<dbReference type="AGR" id="WB:WBGene00001448"/>
<dbReference type="WormBase" id="C03G5.7">
    <property type="protein sequence ID" value="CE48316"/>
    <property type="gene ID" value="WBGene00001448"/>
    <property type="gene designation" value="flp-5"/>
</dbReference>
<dbReference type="eggNOG" id="ENOG502THZ9">
    <property type="taxonomic scope" value="Eukaryota"/>
</dbReference>
<dbReference type="HOGENOM" id="CLU_166337_0_0_1"/>
<dbReference type="InParanoid" id="O61466"/>
<dbReference type="OMA" id="FQCVSAQ"/>
<dbReference type="OrthoDB" id="5865099at2759"/>
<dbReference type="PRO" id="PR:O61466"/>
<dbReference type="Proteomes" id="UP000001940">
    <property type="component" value="Chromosome X"/>
</dbReference>
<dbReference type="Bgee" id="WBGene00001448">
    <property type="expression patterns" value="Expressed in larva and 3 other cell types or tissues"/>
</dbReference>
<dbReference type="GO" id="GO:0005576">
    <property type="term" value="C:extracellular region"/>
    <property type="evidence" value="ECO:0007669"/>
    <property type="project" value="UniProtKB-SubCell"/>
</dbReference>
<dbReference type="GO" id="GO:0007218">
    <property type="term" value="P:neuropeptide signaling pathway"/>
    <property type="evidence" value="ECO:0007669"/>
    <property type="project" value="UniProtKB-KW"/>
</dbReference>
<dbReference type="InterPro" id="IPR002544">
    <property type="entry name" value="FMRFamid-related_peptide-like"/>
</dbReference>
<dbReference type="Pfam" id="PF01581">
    <property type="entry name" value="FARP"/>
    <property type="match status" value="1"/>
</dbReference>
<comment type="function">
    <text evidence="4">FMRFamides and FMRFamide-like peptides are neuropeptides. GAKFIRF-amide has an excitatory effect on dissected pharyngeal myogenic muscle system.</text>
</comment>
<comment type="subcellular location">
    <subcellularLocation>
        <location evidence="6">Secreted</location>
    </subcellularLocation>
</comment>
<comment type="tissue specificity">
    <text evidence="2">Each flp gene is expressed in a distinct set of neurons. Flp-5 is expressed in the ASE sensory neurons, the 14 and M4 cholinergic pharyngeal motoneurons, and the PVT and RMG neurons. It is weakly expressed in the PB and 12 neurons. Also expressed in pharyngeal muscle.</text>
</comment>
<comment type="developmental stage">
    <text evidence="2 5">Expressed from the comma stage of embryogenesis, during all larval stages, and in adults.</text>
</comment>
<comment type="similarity">
    <text evidence="1">Belongs to the FARP (FMRFamide related peptide) family.</text>
</comment>
<comment type="sequence caution" evidence="6">
    <conflict type="erroneous initiation">
        <sequence resource="EMBL-CDS" id="AAC08942"/>
    </conflict>
    <text>Extended N-terminus.</text>
</comment>
<proteinExistence type="evidence at protein level"/>
<keyword id="KW-0027">Amidation</keyword>
<keyword id="KW-0165">Cleavage on pair of basic residues</keyword>
<keyword id="KW-0903">Direct protein sequencing</keyword>
<keyword id="KW-0527">Neuropeptide</keyword>
<keyword id="KW-1185">Reference proteome</keyword>
<keyword id="KW-0964">Secreted</keyword>
<sequence length="92" mass="10466">MSSRSTTIAFLFIATLLVFQCVSAQSSAEDADYLEKYQRIARAPKPKFIRFGRAGAKFIRFGRSRNTWEDGYASPSVNELYVKRGAKFIRFG</sequence>
<reference evidence="6 7" key="1">
    <citation type="journal article" date="1998" name="Brain Res. Mol. Brain Res.">
        <title>FMRFamide-related gene family in the nematode, Caenorhabditis elegans.</title>
        <authorList>
            <person name="Nelson L.S."/>
            <person name="Kim K."/>
            <person name="Memmott J.E."/>
            <person name="Li C."/>
        </authorList>
    </citation>
    <scope>NUCLEOTIDE SEQUENCE [MRNA]</scope>
    <scope>DEVELOPMENTAL STAGE</scope>
    <source>
        <strain evidence="7">Bristol N2</strain>
    </source>
</reference>
<reference key="2">
    <citation type="journal article" date="1998" name="Science">
        <title>Genome sequence of the nematode C. elegans: a platform for investigating biology.</title>
        <authorList>
            <consortium name="The C. elegans sequencing consortium"/>
        </authorList>
    </citation>
    <scope>NUCLEOTIDE SEQUENCE [LARGE SCALE GENOMIC DNA]</scope>
    <source>
        <strain>Bristol N2</strain>
    </source>
</reference>
<reference evidence="6" key="3">
    <citation type="journal article" date="2005" name="Biochem. Biophys. Res. Commun.">
        <title>Discovering neuropeptides in Caenorhabditis elegans by two dimensional liquid chromatography and mass spectrometry.</title>
        <authorList>
            <person name="Husson S.J."/>
            <person name="Clynen E."/>
            <person name="Baggerman G."/>
            <person name="De Loof A."/>
            <person name="Schoofs L."/>
        </authorList>
    </citation>
    <scope>PROTEIN SEQUENCE OF 85-91</scope>
    <scope>AMIDATION AT PHE-91</scope>
    <source>
        <strain evidence="3">Bristol N2</strain>
    </source>
</reference>
<reference evidence="6" key="4">
    <citation type="journal article" date="2004" name="J. Comp. Neurol.">
        <title>Expression and regulation of an FMRFamide-related neuropeptide gene family in Caenorhabditis elegans.</title>
        <authorList>
            <person name="Kim K."/>
            <person name="Li C."/>
        </authorList>
    </citation>
    <scope>TISSUE SPECIFICITY</scope>
    <scope>DEVELOPMENTAL STAGE</scope>
</reference>
<reference evidence="6" key="5">
    <citation type="journal article" date="2005" name="J. Neurobiol.">
        <title>Role of a FMRFamide-like family of neuropeptides in the pharyngeal nervous system of Caenorhabditis elegans.</title>
        <authorList>
            <person name="Papaioannou S."/>
            <person name="Marsden D."/>
            <person name="Franks C.J."/>
            <person name="Walker R.J."/>
            <person name="Holden-Dye L."/>
        </authorList>
    </citation>
    <scope>FUNCTION</scope>
</reference>
<name>FLP05_CAEEL</name>
<accession>O61466</accession>
<evidence type="ECO:0000255" key="1"/>
<evidence type="ECO:0000269" key="2">
    <source>
    </source>
</evidence>
<evidence type="ECO:0000269" key="3">
    <source>
    </source>
</evidence>
<evidence type="ECO:0000269" key="4">
    <source>
    </source>
</evidence>
<evidence type="ECO:0000269" key="5">
    <source>
    </source>
</evidence>
<evidence type="ECO:0000305" key="6"/>
<evidence type="ECO:0000312" key="7">
    <source>
        <dbReference type="EMBL" id="AAC08942.1"/>
    </source>
</evidence>
<organism>
    <name type="scientific">Caenorhabditis elegans</name>
    <dbReference type="NCBI Taxonomy" id="6239"/>
    <lineage>
        <taxon>Eukaryota</taxon>
        <taxon>Metazoa</taxon>
        <taxon>Ecdysozoa</taxon>
        <taxon>Nematoda</taxon>
        <taxon>Chromadorea</taxon>
        <taxon>Rhabditida</taxon>
        <taxon>Rhabditina</taxon>
        <taxon>Rhabditomorpha</taxon>
        <taxon>Rhabditoidea</taxon>
        <taxon>Rhabditidae</taxon>
        <taxon>Peloderinae</taxon>
        <taxon>Caenorhabditis</taxon>
    </lineage>
</organism>
<feature type="propeptide" id="PRO_0000312043">
    <location>
        <begin position="1"/>
        <end position="41"/>
    </location>
</feature>
<feature type="peptide" id="PRO_0000312044" description="APKPKFIRF-amide" evidence="1">
    <location>
        <begin position="43"/>
        <end position="51"/>
    </location>
</feature>
<feature type="peptide" id="PRO_0000312045" description="AGAKFIRF-amide" evidence="1">
    <location>
        <begin position="54"/>
        <end position="61"/>
    </location>
</feature>
<feature type="propeptide" id="PRO_0000312046">
    <location>
        <begin position="64"/>
        <end position="82"/>
    </location>
</feature>
<feature type="peptide" id="PRO_0000312047" description="GAKFIRF-amide">
    <location>
        <begin position="85"/>
        <end position="91"/>
    </location>
</feature>
<feature type="modified residue" description="Phenylalanine amide" evidence="1">
    <location>
        <position position="51"/>
    </location>
</feature>
<feature type="modified residue" description="Phenylalanine amide" evidence="1">
    <location>
        <position position="61"/>
    </location>
</feature>
<feature type="modified residue" description="Phenylalanine amide" evidence="3">
    <location>
        <position position="91"/>
    </location>
</feature>
<gene>
    <name evidence="7" type="primary">flp-5</name>
    <name type="ORF">C03G5.7</name>
</gene>
<protein>
    <recommendedName>
        <fullName>FMRFamide-like neuropeptides 5</fullName>
    </recommendedName>
    <component>
        <recommendedName>
            <fullName>APKPKFIRF-amide</fullName>
        </recommendedName>
    </component>
    <component>
        <recommendedName>
            <fullName>AGAKFIRF-amide</fullName>
        </recommendedName>
    </component>
    <component>
        <recommendedName>
            <fullName>GAKFIRF-amide</fullName>
        </recommendedName>
    </component>
</protein>